<accession>Q0VCA2</accession>
<proteinExistence type="evidence at transcript level"/>
<evidence type="ECO:0000250" key="1">
    <source>
        <dbReference type="UniProtKB" id="Q96B67"/>
    </source>
</evidence>
<evidence type="ECO:0000256" key="2">
    <source>
        <dbReference type="SAM" id="MobiDB-lite"/>
    </source>
</evidence>
<evidence type="ECO:0000305" key="3"/>
<keyword id="KW-1003">Cell membrane</keyword>
<keyword id="KW-0963">Cytoplasm</keyword>
<keyword id="KW-0967">Endosome</keyword>
<keyword id="KW-0458">Lysosome</keyword>
<keyword id="KW-0472">Membrane</keyword>
<keyword id="KW-1185">Reference proteome</keyword>
<keyword id="KW-0677">Repeat</keyword>
<feature type="chain" id="PRO_0000282340" description="Arrestin domain-containing protein 3">
    <location>
        <begin position="1"/>
        <end position="414"/>
    </location>
</feature>
<feature type="region of interest" description="Disordered" evidence="2">
    <location>
        <begin position="393"/>
        <end position="414"/>
    </location>
</feature>
<feature type="short sequence motif" description="PPxY motif 1" evidence="3">
    <location>
        <begin position="346"/>
        <end position="349"/>
    </location>
</feature>
<feature type="short sequence motif" description="PPxY motif 2" evidence="3">
    <location>
        <begin position="391"/>
        <end position="394"/>
    </location>
</feature>
<feature type="compositionally biased region" description="Basic and acidic residues" evidence="2">
    <location>
        <begin position="405"/>
        <end position="414"/>
    </location>
</feature>
<name>ARRD3_BOVIN</name>
<reference key="1">
    <citation type="submission" date="2006-08" db="EMBL/GenBank/DDBJ databases">
        <authorList>
            <consortium name="NIH - Mammalian Gene Collection (MGC) project"/>
        </authorList>
    </citation>
    <scope>NUCLEOTIDE SEQUENCE [LARGE SCALE MRNA]</scope>
    <source>
        <strain>Hereford</strain>
        <tissue>Fetal cerebellum</tissue>
    </source>
</reference>
<sequence length="414" mass="46370">MVLGKVKSLTISFDCLNDSNVPVYSSGDTVSGRVNLEVTGEIRVKSLKIHARGHAKVRWTESRNAGSNTAYTQNYTEEVEYFNHKDILIGHERDDDNSEEGFNTIHSGRHEYAFSFELPQTPLATSFEGRHGSVRYWVKAELHRPWLLPVKLKKEFTVFEHIDINTPSLLSPQAGTKEKTLYCWFCTSGPISLSAKIERKGYTPGESIQIFAEIENCSSRMVVPKAAIYQTQAFYAKGKMKEVKQLVANLRGESLSSGKTETWNGKLLKIPPVSPSILDCSIIRVEYSLMVYVDIPGAMDLFLNLPLVIGTIPLHPFGSRTSSVSSQCSMNMNWLGLSLPERPEAPPSYAEVVTEEQRRNNLAPGSACDDFERALQGPLFAYIQEFRFLPPPLYSEIDPNPDQPADDRPSCPSR</sequence>
<gene>
    <name type="primary">ARRDC3</name>
</gene>
<comment type="function">
    <text evidence="1">Adapter protein that plays a role in regulating cell-surface expression of adrenergic receptors and probably also other G protein-coupled receptors. Plays a role in NEDD4-mediated ubiquitination and endocytosis af activated ADRB2 and subsequent ADRB2 degradation. May recruit NEDD4 to ADRB2. Alternatively, may function as adapter protein that does not play a major role in recruiting NEDD4 to ADRB2, but rather plays a role in a targeting ADRB2 to endosomes.</text>
</comment>
<comment type="subunit">
    <text evidence="1">Interacts (via PPxY motifs) with NEDD4 (via WW domains). Interacts with ADRB2. Interacts with ADRB3. Interacts with HGS (via PPxY motifs). Does not bind TXN (thioredoxin). Interacts with ITCH.</text>
</comment>
<comment type="subcellular location">
    <subcellularLocation>
        <location evidence="1">Cytoplasm</location>
    </subcellularLocation>
    <subcellularLocation>
        <location evidence="1">Cell membrane</location>
        <topology evidence="1">Peripheral membrane protein</topology>
        <orientation evidence="1">Cytoplasmic side</orientation>
    </subcellularLocation>
    <subcellularLocation>
        <location evidence="1">Lysosome</location>
    </subcellularLocation>
    <subcellularLocation>
        <location evidence="1">Endosome</location>
    </subcellularLocation>
    <subcellularLocation>
        <location evidence="1">Early endosome</location>
    </subcellularLocation>
    <text evidence="1">Associated with plasma membrane, as well as with endosomes and lysosomes during endocytosis.</text>
</comment>
<comment type="similarity">
    <text evidence="3">Belongs to the arrestin family.</text>
</comment>
<organism>
    <name type="scientific">Bos taurus</name>
    <name type="common">Bovine</name>
    <dbReference type="NCBI Taxonomy" id="9913"/>
    <lineage>
        <taxon>Eukaryota</taxon>
        <taxon>Metazoa</taxon>
        <taxon>Chordata</taxon>
        <taxon>Craniata</taxon>
        <taxon>Vertebrata</taxon>
        <taxon>Euteleostomi</taxon>
        <taxon>Mammalia</taxon>
        <taxon>Eutheria</taxon>
        <taxon>Laurasiatheria</taxon>
        <taxon>Artiodactyla</taxon>
        <taxon>Ruminantia</taxon>
        <taxon>Pecora</taxon>
        <taxon>Bovidae</taxon>
        <taxon>Bovinae</taxon>
        <taxon>Bos</taxon>
    </lineage>
</organism>
<dbReference type="EMBL" id="BC120276">
    <property type="protein sequence ID" value="AAI20277.1"/>
    <property type="molecule type" value="mRNA"/>
</dbReference>
<dbReference type="RefSeq" id="NP_001069725.1">
    <property type="nucleotide sequence ID" value="NM_001076257.2"/>
</dbReference>
<dbReference type="SMR" id="Q0VCA2"/>
<dbReference type="FunCoup" id="Q0VCA2">
    <property type="interactions" value="225"/>
</dbReference>
<dbReference type="STRING" id="9913.ENSBTAP00000009364"/>
<dbReference type="PaxDb" id="9913-ENSBTAP00000009364"/>
<dbReference type="Ensembl" id="ENSBTAT00000009364.6">
    <property type="protein sequence ID" value="ENSBTAP00000009364.5"/>
    <property type="gene ID" value="ENSBTAG00000007116.7"/>
</dbReference>
<dbReference type="GeneID" id="541123"/>
<dbReference type="KEGG" id="bta:541123"/>
<dbReference type="CTD" id="57561"/>
<dbReference type="VEuPathDB" id="HostDB:ENSBTAG00000007116"/>
<dbReference type="VGNC" id="VGNC:26173">
    <property type="gene designation" value="ARRDC3"/>
</dbReference>
<dbReference type="eggNOG" id="KOG3780">
    <property type="taxonomic scope" value="Eukaryota"/>
</dbReference>
<dbReference type="GeneTree" id="ENSGT00940000155411"/>
<dbReference type="HOGENOM" id="CLU_039221_1_1_1"/>
<dbReference type="InParanoid" id="Q0VCA2"/>
<dbReference type="OMA" id="IHAGRHE"/>
<dbReference type="OrthoDB" id="2333384at2759"/>
<dbReference type="TreeFam" id="TF313650"/>
<dbReference type="Proteomes" id="UP000009136">
    <property type="component" value="Chromosome 7"/>
</dbReference>
<dbReference type="Bgee" id="ENSBTAG00000007116">
    <property type="expression patterns" value="Expressed in myometrium and 106 other cell types or tissues"/>
</dbReference>
<dbReference type="GO" id="GO:0005737">
    <property type="term" value="C:cytoplasm"/>
    <property type="evidence" value="ECO:0000318"/>
    <property type="project" value="GO_Central"/>
</dbReference>
<dbReference type="GO" id="GO:0005769">
    <property type="term" value="C:early endosome"/>
    <property type="evidence" value="ECO:0007669"/>
    <property type="project" value="UniProtKB-SubCell"/>
</dbReference>
<dbReference type="GO" id="GO:0005768">
    <property type="term" value="C:endosome"/>
    <property type="evidence" value="ECO:0000318"/>
    <property type="project" value="GO_Central"/>
</dbReference>
<dbReference type="GO" id="GO:0005764">
    <property type="term" value="C:lysosome"/>
    <property type="evidence" value="ECO:0007669"/>
    <property type="project" value="UniProtKB-SubCell"/>
</dbReference>
<dbReference type="GO" id="GO:0005886">
    <property type="term" value="C:plasma membrane"/>
    <property type="evidence" value="ECO:0000318"/>
    <property type="project" value="GO_Central"/>
</dbReference>
<dbReference type="GO" id="GO:0031699">
    <property type="term" value="F:beta-3 adrenergic receptor binding"/>
    <property type="evidence" value="ECO:0007669"/>
    <property type="project" value="Ensembl"/>
</dbReference>
<dbReference type="GO" id="GO:0060613">
    <property type="term" value="P:fat pad development"/>
    <property type="evidence" value="ECO:0007669"/>
    <property type="project" value="Ensembl"/>
</dbReference>
<dbReference type="GO" id="GO:0031649">
    <property type="term" value="P:heat generation"/>
    <property type="evidence" value="ECO:0007669"/>
    <property type="project" value="Ensembl"/>
</dbReference>
<dbReference type="GO" id="GO:0071878">
    <property type="term" value="P:negative regulation of adenylate cyclase-activating adrenergic receptor signaling pathway"/>
    <property type="evidence" value="ECO:0007669"/>
    <property type="project" value="Ensembl"/>
</dbReference>
<dbReference type="GO" id="GO:0120163">
    <property type="term" value="P:negative regulation of cold-induced thermogenesis"/>
    <property type="evidence" value="ECO:0007669"/>
    <property type="project" value="Ensembl"/>
</dbReference>
<dbReference type="GO" id="GO:0031651">
    <property type="term" value="P:negative regulation of heat generation"/>
    <property type="evidence" value="ECO:0007669"/>
    <property type="project" value="Ensembl"/>
</dbReference>
<dbReference type="GO" id="GO:0090327">
    <property type="term" value="P:negative regulation of locomotion involved in locomotory behavior"/>
    <property type="evidence" value="ECO:0007669"/>
    <property type="project" value="Ensembl"/>
</dbReference>
<dbReference type="GO" id="GO:0035332">
    <property type="term" value="P:positive regulation of hippo signaling"/>
    <property type="evidence" value="ECO:0007669"/>
    <property type="project" value="Ensembl"/>
</dbReference>
<dbReference type="GO" id="GO:0015031">
    <property type="term" value="P:protein transport"/>
    <property type="evidence" value="ECO:0000318"/>
    <property type="project" value="GO_Central"/>
</dbReference>
<dbReference type="GO" id="GO:0043588">
    <property type="term" value="P:skin development"/>
    <property type="evidence" value="ECO:0007669"/>
    <property type="project" value="Ensembl"/>
</dbReference>
<dbReference type="FunFam" id="2.60.40.640:FF:000005">
    <property type="entry name" value="Arrestin domain-containing protein 3"/>
    <property type="match status" value="1"/>
</dbReference>
<dbReference type="FunFam" id="2.60.40.640:FF:000007">
    <property type="entry name" value="Arrestin domain-containing protein 3 mRNA"/>
    <property type="match status" value="1"/>
</dbReference>
<dbReference type="Gene3D" id="2.60.40.640">
    <property type="match status" value="2"/>
</dbReference>
<dbReference type="InterPro" id="IPR014752">
    <property type="entry name" value="Arrestin-like_C"/>
</dbReference>
<dbReference type="InterPro" id="IPR011021">
    <property type="entry name" value="Arrestin-like_N"/>
</dbReference>
<dbReference type="InterPro" id="IPR011022">
    <property type="entry name" value="Arrestin_C-like"/>
</dbReference>
<dbReference type="InterPro" id="IPR050357">
    <property type="entry name" value="Arrestin_domain-protein"/>
</dbReference>
<dbReference type="InterPro" id="IPR014756">
    <property type="entry name" value="Ig_E-set"/>
</dbReference>
<dbReference type="PANTHER" id="PTHR11188">
    <property type="entry name" value="ARRESTIN DOMAIN CONTAINING PROTEIN"/>
    <property type="match status" value="1"/>
</dbReference>
<dbReference type="PANTHER" id="PTHR11188:SF49">
    <property type="entry name" value="ARRESTIN DOMAIN-CONTAINING PROTEIN 3"/>
    <property type="match status" value="1"/>
</dbReference>
<dbReference type="Pfam" id="PF02752">
    <property type="entry name" value="Arrestin_C"/>
    <property type="match status" value="1"/>
</dbReference>
<dbReference type="Pfam" id="PF00339">
    <property type="entry name" value="Arrestin_N"/>
    <property type="match status" value="1"/>
</dbReference>
<dbReference type="SMART" id="SM01017">
    <property type="entry name" value="Arrestin_C"/>
    <property type="match status" value="1"/>
</dbReference>
<dbReference type="SUPFAM" id="SSF81296">
    <property type="entry name" value="E set domains"/>
    <property type="match status" value="2"/>
</dbReference>
<protein>
    <recommendedName>
        <fullName>Arrestin domain-containing protein 3</fullName>
    </recommendedName>
</protein>